<accession>Q9BI14</accession>
<accession>A0A175JU95</accession>
<accession>B1N420</accession>
<dbReference type="EMBL" id="AJ311621">
    <property type="protein sequence ID" value="CAC34299.1"/>
    <property type="molecule type" value="Genomic_DNA"/>
</dbReference>
<dbReference type="EMBL" id="DS571317">
    <property type="protein sequence ID" value="EDS89288.1"/>
    <property type="molecule type" value="Genomic_DNA"/>
</dbReference>
<dbReference type="RefSeq" id="XP_001913936.1">
    <property type="nucleotide sequence ID" value="XM_001913901.1"/>
</dbReference>
<dbReference type="SMR" id="Q9BI14"/>
<dbReference type="STRING" id="5759.B1N420"/>
<dbReference type="EnsemblProtists" id="GAT97339">
    <property type="protein sequence ID" value="GAT97339"/>
    <property type="gene ID" value="CL6EHI_192090"/>
</dbReference>
<dbReference type="EnsemblProtists" id="rna_EHI_192090-1">
    <property type="protein sequence ID" value="rna_EHI_192090-1"/>
    <property type="gene ID" value="EHI_192090"/>
</dbReference>
<dbReference type="GeneID" id="6219925"/>
<dbReference type="KEGG" id="ehi:EHI_192090"/>
<dbReference type="VEuPathDB" id="AmoebaDB:EHI5A_109550"/>
<dbReference type="VEuPathDB" id="AmoebaDB:EHI_192090"/>
<dbReference type="VEuPathDB" id="AmoebaDB:KM1_295400"/>
<dbReference type="eggNOG" id="KOG1742">
    <property type="taxonomic scope" value="Eukaryota"/>
</dbReference>
<dbReference type="HOGENOM" id="CLU_109163_1_0_1"/>
<dbReference type="OMA" id="WGRVGQH"/>
<dbReference type="OrthoDB" id="61900at2759"/>
<dbReference type="Proteomes" id="UP000001926">
    <property type="component" value="Partially assembled WGS sequence"/>
</dbReference>
<dbReference type="GO" id="GO:0022625">
    <property type="term" value="C:cytosolic large ribosomal subunit"/>
    <property type="evidence" value="ECO:0000318"/>
    <property type="project" value="GO_Central"/>
</dbReference>
<dbReference type="GO" id="GO:0005783">
    <property type="term" value="C:endoplasmic reticulum"/>
    <property type="evidence" value="ECO:0007669"/>
    <property type="project" value="UniProtKB-SubCell"/>
</dbReference>
<dbReference type="GO" id="GO:0003735">
    <property type="term" value="F:structural constituent of ribosome"/>
    <property type="evidence" value="ECO:0000318"/>
    <property type="project" value="GO_Central"/>
</dbReference>
<dbReference type="GO" id="GO:0006412">
    <property type="term" value="P:translation"/>
    <property type="evidence" value="ECO:0007669"/>
    <property type="project" value="InterPro"/>
</dbReference>
<dbReference type="FunFam" id="3.100.10.10:FF:000002">
    <property type="entry name" value="60S ribosomal protein L27a"/>
    <property type="match status" value="1"/>
</dbReference>
<dbReference type="Gene3D" id="3.100.10.10">
    <property type="match status" value="1"/>
</dbReference>
<dbReference type="HAMAP" id="MF_01341">
    <property type="entry name" value="Ribosomal_uL15"/>
    <property type="match status" value="1"/>
</dbReference>
<dbReference type="InterPro" id="IPR030878">
    <property type="entry name" value="Ribosomal_uL15"/>
</dbReference>
<dbReference type="InterPro" id="IPR021131">
    <property type="entry name" value="Ribosomal_uL15/eL18"/>
</dbReference>
<dbReference type="InterPro" id="IPR036227">
    <property type="entry name" value="Ribosomal_uL15/eL18_sf"/>
</dbReference>
<dbReference type="InterPro" id="IPR001196">
    <property type="entry name" value="Ribosomal_uL15_CS"/>
</dbReference>
<dbReference type="PANTHER" id="PTHR11721">
    <property type="entry name" value="60S RIBOSOMAL PROTEIN L27A"/>
    <property type="match status" value="1"/>
</dbReference>
<dbReference type="PANTHER" id="PTHR11721:SF3">
    <property type="entry name" value="LARGE RIBOSOMAL SUBUNIT PROTEIN UL15"/>
    <property type="match status" value="1"/>
</dbReference>
<dbReference type="Pfam" id="PF00828">
    <property type="entry name" value="Ribosomal_L27A"/>
    <property type="match status" value="1"/>
</dbReference>
<dbReference type="SUPFAM" id="SSF52080">
    <property type="entry name" value="Ribosomal proteins L15p and L18e"/>
    <property type="match status" value="1"/>
</dbReference>
<dbReference type="PROSITE" id="PS00475">
    <property type="entry name" value="RIBOSOMAL_L15"/>
    <property type="match status" value="1"/>
</dbReference>
<evidence type="ECO:0000250" key="1">
    <source>
        <dbReference type="UniProtKB" id="A1XQU5"/>
    </source>
</evidence>
<evidence type="ECO:0000250" key="2">
    <source>
        <dbReference type="UniProtKB" id="P61353"/>
    </source>
</evidence>
<evidence type="ECO:0000256" key="3">
    <source>
        <dbReference type="SAM" id="MobiDB-lite"/>
    </source>
</evidence>
<evidence type="ECO:0000305" key="4"/>
<evidence type="ECO:0000312" key="5">
    <source>
        <dbReference type="EMBL" id="CAC34299.1"/>
    </source>
</evidence>
<evidence type="ECO:0000312" key="6">
    <source>
        <dbReference type="EMBL" id="EDS89288.1"/>
    </source>
</evidence>
<comment type="function">
    <text evidence="2">Component of the large ribosomal subunit. The ribosome is a large ribonucleoprotein complex responsible for the synthesis of proteins in the cell.</text>
</comment>
<comment type="subunit">
    <text evidence="2">Component of the large ribosomal subunit.</text>
</comment>
<comment type="subcellular location">
    <subcellularLocation>
        <location evidence="2">Cytoplasm</location>
        <location evidence="2">Cytosol</location>
    </subcellularLocation>
    <subcellularLocation>
        <location evidence="2">Cytoplasm</location>
    </subcellularLocation>
    <subcellularLocation>
        <location evidence="1">Endoplasmic reticulum</location>
    </subcellularLocation>
</comment>
<comment type="similarity">
    <text evidence="4">Belongs to the universal ribosomal protein uL15 family.</text>
</comment>
<gene>
    <name type="primary">rpl27a-3</name>
    <name evidence="6" type="ORF">EHI_192090</name>
</gene>
<feature type="chain" id="PRO_0000104889" description="Large ribosomal subunit protein uL15C">
    <location>
        <begin position="1"/>
        <end position="149"/>
    </location>
</feature>
<feature type="region of interest" description="Disordered" evidence="3">
    <location>
        <begin position="21"/>
        <end position="40"/>
    </location>
</feature>
<keyword id="KW-0963">Cytoplasm</keyword>
<keyword id="KW-0256">Endoplasmic reticulum</keyword>
<keyword id="KW-1185">Reference proteome</keyword>
<keyword id="KW-0687">Ribonucleoprotein</keyword>
<keyword id="KW-0689">Ribosomal protein</keyword>
<sequence length="149" mass="17065">MATRFRQTRRRRGHVSMGYGRIGKHRKQRGGRGNAGGQHHRKTWFTTFHPDYFGKHGMRVFHLKANKYYCPSINVDSLWSLVGKDVQEQYKNAKTGEEVPVIDCVKHGYFKVLGKGFLPKQPVIVRARYFSEKAQQKIKAVGGACELTA</sequence>
<protein>
    <recommendedName>
        <fullName evidence="4">Large ribosomal subunit protein uL15C</fullName>
    </recommendedName>
    <alternativeName>
        <fullName>60S ribosomal protein L27a-3</fullName>
    </alternativeName>
</protein>
<reference evidence="5" key="1">
    <citation type="journal article" date="2001" name="Protist">
        <title>Introns of Entamoeba histolytica and Entamoeba dispar.</title>
        <authorList>
            <person name="Willhoeft U."/>
            <person name="Campos-Gongora E."/>
            <person name="Touzni S."/>
            <person name="Bruchhaus I."/>
            <person name="Tannich E."/>
        </authorList>
    </citation>
    <scope>NUCLEOTIDE SEQUENCE [GENOMIC DNA]</scope>
    <source>
        <strain evidence="5">ATCC 30459 / HM-1:IMSS / ABRM</strain>
    </source>
</reference>
<reference evidence="6" key="2">
    <citation type="journal article" date="2005" name="Nature">
        <title>The genome of the protist parasite Entamoeba histolytica.</title>
        <authorList>
            <person name="Loftus B.J."/>
            <person name="Anderson I."/>
            <person name="Davies R."/>
            <person name="Alsmark U.C."/>
            <person name="Samuelson J."/>
            <person name="Amedeo P."/>
            <person name="Roncaglia P."/>
            <person name="Berriman M."/>
            <person name="Hirt R.P."/>
            <person name="Mann B.J."/>
            <person name="Nozaki T."/>
            <person name="Suh B."/>
            <person name="Pop M."/>
            <person name="Duchene M."/>
            <person name="Ackers J."/>
            <person name="Tannich E."/>
            <person name="Leippe M."/>
            <person name="Hofer M."/>
            <person name="Bruchhaus I."/>
            <person name="Willhoeft U."/>
            <person name="Bhattacharya A."/>
            <person name="Chillingworth T."/>
            <person name="Churcher C.M."/>
            <person name="Hance Z."/>
            <person name="Harris B."/>
            <person name="Harris D."/>
            <person name="Jagels K."/>
            <person name="Moule S."/>
            <person name="Mungall K.L."/>
            <person name="Ormond D."/>
            <person name="Squares R."/>
            <person name="Whitehead S."/>
            <person name="Quail M.A."/>
            <person name="Rabbinowitsch E."/>
            <person name="Norbertczak H."/>
            <person name="Price C."/>
            <person name="Wang Z."/>
            <person name="Guillen N."/>
            <person name="Gilchrist C."/>
            <person name="Stroup S.E."/>
            <person name="Bhattacharya S."/>
            <person name="Lohia A."/>
            <person name="Foster P.G."/>
            <person name="Sicheritz-Ponten T."/>
            <person name="Weber C."/>
            <person name="Singh U."/>
            <person name="Mukherjee C."/>
            <person name="El-Sayed N.M.A."/>
            <person name="Petri W.A."/>
            <person name="Clark C.G."/>
            <person name="Embley T.M."/>
            <person name="Barrell B.G."/>
            <person name="Fraser C.M."/>
            <person name="Hall N."/>
        </authorList>
    </citation>
    <scope>NUCLEOTIDE SEQUENCE [LARGE SCALE GENOMIC DNA]</scope>
    <source>
        <strain evidence="6">ATCC 30459 / HM-1:IMSS / ABRM</strain>
    </source>
</reference>
<organism evidence="6">
    <name type="scientific">Entamoeba histolytica (strain ATCC 30459 / HM-1:IMSS / ABRM)</name>
    <dbReference type="NCBI Taxonomy" id="294381"/>
    <lineage>
        <taxon>Eukaryota</taxon>
        <taxon>Amoebozoa</taxon>
        <taxon>Evosea</taxon>
        <taxon>Archamoebae</taxon>
        <taxon>Mastigamoebida</taxon>
        <taxon>Entamoebidae</taxon>
        <taxon>Entamoeba</taxon>
    </lineage>
</organism>
<name>R27A3_ENTH1</name>
<proteinExistence type="inferred from homology"/>